<comment type="function">
    <text evidence="2">Terpene synthase that converts its substrate farnesyl diphosphate (FPP) into the sesquiterpene (E)-nerolidol.</text>
</comment>
<comment type="catalytic activity">
    <reaction evidence="2">
        <text>(2E,6E)-farnesyl diphosphate + H2O = (6E)-nerolidol + diphosphate</text>
        <dbReference type="Rhea" id="RHEA:56984"/>
        <dbReference type="ChEBI" id="CHEBI:15377"/>
        <dbReference type="ChEBI" id="CHEBI:33019"/>
        <dbReference type="ChEBI" id="CHEBI:141283"/>
        <dbReference type="ChEBI" id="CHEBI:175763"/>
    </reaction>
    <physiologicalReaction direction="left-to-right" evidence="2">
        <dbReference type="Rhea" id="RHEA:56985"/>
    </physiologicalReaction>
</comment>
<comment type="induction">
    <text evidence="2">Expression is almost undetectable in vegetatively growing cells and increases during development induced by starvation (PubMed:27790999). Expression is highest during he ultimate stage of mature fruiting body (approximately 24 hours after induction) (PubMed:27790999).</text>
</comment>
<comment type="domain">
    <text evidence="5">Contains several highly conserved motifs that are important for catalytic activity including the aspartate-rich 'DDxx(x)D/E' motif and the 'NDxxSxxxD/E' motif, both of which are involved in complexing metal ions to coordinate the binding of the isoprenyl diphosphate substrate in the active site.</text>
</comment>
<comment type="similarity">
    <text evidence="4">Belongs to the terpene synthase family.</text>
</comment>
<proteinExistence type="evidence at protein level"/>
<feature type="chain" id="PRO_0000456820" description="Terpene synthase 4">
    <location>
        <begin position="1"/>
        <end position="335"/>
    </location>
</feature>
<feature type="short sequence motif" description="DDxx(x)D/E motif" evidence="1">
    <location>
        <begin position="103"/>
        <end position="108"/>
    </location>
</feature>
<feature type="short sequence motif" description="NDxxSxxxD/E motif" evidence="1">
    <location>
        <begin position="243"/>
        <end position="251"/>
    </location>
</feature>
<sequence length="335" mass="39912">MEEKIKFYFEIIDFQNQKFKIQEFTSKLIGLKEESFTTFKPIVYEKYLNWTQSIEESILKTNGTINKSIFEEIFSYCGYIGEFLEYEPFIVFLKFTTFGIILDDYIFEKINSLNMKLNEKEKLINSLIYYNNKNENKIGFEFWEIINEFQNFTHKESFQRIINANSLWIKSSIDSRNISNSPINSRCSFNEYFEKRSSDASGDFILTISMIGIMDNYIENSIIESKEFQTINYHAKSFFLLINDLYSFNREINENDLLNYIKILAIQLNSIQLSIDKTIELIIDHYLKFLSSIETILKLYQNDQSTYQLLKQVFQNSNKILSGIYFAHKKSKRYN</sequence>
<accession>Q75J90</accession>
<accession>Q54ZR0</accession>
<keyword id="KW-0456">Lyase</keyword>
<keyword id="KW-0479">Metal-binding</keyword>
<dbReference type="EC" id="4.2.3.-" evidence="2"/>
<dbReference type="EMBL" id="KX364377">
    <property type="protein sequence ID" value="APC23388.1"/>
    <property type="molecule type" value="mRNA"/>
</dbReference>
<dbReference type="EMBL" id="AAFI01000045">
    <property type="protein sequence ID" value="EAL68749.1"/>
    <property type="molecule type" value="Genomic_DNA"/>
</dbReference>
<dbReference type="RefSeq" id="XP_642676.1">
    <property type="nucleotide sequence ID" value="XM_637584.1"/>
</dbReference>
<dbReference type="SMR" id="Q75J90"/>
<dbReference type="STRING" id="44689.Q75J90"/>
<dbReference type="PaxDb" id="44689-DDB0169193"/>
<dbReference type="KEGG" id="ddi:DDB_G0277385"/>
<dbReference type="dictyBase" id="DDB_G0277385">
    <property type="gene designation" value="tps4"/>
</dbReference>
<dbReference type="VEuPathDB" id="AmoebaDB:DDB_G0277385"/>
<dbReference type="HOGENOM" id="CLU_830086_0_0_1"/>
<dbReference type="InParanoid" id="Q75J90"/>
<dbReference type="PRO" id="PR:Q75J90"/>
<dbReference type="GO" id="GO:0102145">
    <property type="term" value="F:(3R)-(E)-nerolidol synthase activity"/>
    <property type="evidence" value="ECO:0000314"/>
    <property type="project" value="dictyBase"/>
</dbReference>
<dbReference type="GO" id="GO:0046872">
    <property type="term" value="F:metal ion binding"/>
    <property type="evidence" value="ECO:0007669"/>
    <property type="project" value="UniProtKB-KW"/>
</dbReference>
<dbReference type="GO" id="GO:0051762">
    <property type="term" value="P:sesquiterpene biosynthetic process"/>
    <property type="evidence" value="ECO:0000304"/>
    <property type="project" value="dictyBase"/>
</dbReference>
<dbReference type="CDD" id="cd00868">
    <property type="entry name" value="Terpene_cyclase_C1"/>
    <property type="match status" value="1"/>
</dbReference>
<dbReference type="FunFam" id="1.10.600.10:FF:000078">
    <property type="entry name" value="Terpene synthase"/>
    <property type="match status" value="1"/>
</dbReference>
<dbReference type="Gene3D" id="1.10.600.10">
    <property type="entry name" value="Farnesyl Diphosphate Synthase"/>
    <property type="match status" value="1"/>
</dbReference>
<dbReference type="InterPro" id="IPR008949">
    <property type="entry name" value="Isoprenoid_synthase_dom_sf"/>
</dbReference>
<dbReference type="Pfam" id="PF19086">
    <property type="entry name" value="Terpene_syn_C_2"/>
    <property type="match status" value="1"/>
</dbReference>
<dbReference type="SUPFAM" id="SSF48576">
    <property type="entry name" value="Terpenoid synthases"/>
    <property type="match status" value="1"/>
</dbReference>
<protein>
    <recommendedName>
        <fullName evidence="3">Terpene synthase 4</fullName>
        <ecNumber evidence="2">4.2.3.-</ecNumber>
    </recommendedName>
</protein>
<gene>
    <name evidence="3" type="primary">TPS4</name>
    <name type="ORF">DDB0169193</name>
</gene>
<reference key="1">
    <citation type="journal article" date="2016" name="Proc. Natl. Acad. Sci. U.S.A.">
        <title>Terpene synthase genes in eukaryotes beyond plants and fungi: Occurrence in social amoebae.</title>
        <authorList>
            <person name="Chen X."/>
            <person name="Koellner T.G."/>
            <person name="Jia Q."/>
            <person name="Norris A."/>
            <person name="Santhanam B."/>
            <person name="Rabe P."/>
            <person name="Dickschat J.S."/>
            <person name="Shaulsky G."/>
            <person name="Gershenzon J."/>
            <person name="Chen F."/>
        </authorList>
    </citation>
    <scope>NUCLEOTIDE SEQUENCE [MRNA]</scope>
    <scope>INDUCTION</scope>
    <scope>FUNCTION</scope>
    <scope>CATALYTIC ACTIVITY</scope>
    <scope>DOMAIN</scope>
    <source>
        <strain>AX4</strain>
    </source>
</reference>
<reference key="2">
    <citation type="journal article" date="2002" name="Nature">
        <title>Sequence and analysis of chromosome 2 of Dictyostelium discoideum.</title>
        <authorList>
            <person name="Gloeckner G."/>
            <person name="Eichinger L."/>
            <person name="Szafranski K."/>
            <person name="Pachebat J.A."/>
            <person name="Bankier A.T."/>
            <person name="Dear P.H."/>
            <person name="Lehmann R."/>
            <person name="Baumgart C."/>
            <person name="Parra G."/>
            <person name="Abril J.F."/>
            <person name="Guigo R."/>
            <person name="Kumpf K."/>
            <person name="Tunggal B."/>
            <person name="Cox E.C."/>
            <person name="Quail M.A."/>
            <person name="Platzer M."/>
            <person name="Rosenthal A."/>
            <person name="Noegel A.A."/>
        </authorList>
    </citation>
    <scope>NUCLEOTIDE SEQUENCE [LARGE SCALE GENOMIC DNA]</scope>
    <source>
        <strain>AX4</strain>
    </source>
</reference>
<reference key="3">
    <citation type="journal article" date="2005" name="Nature">
        <title>The genome of the social amoeba Dictyostelium discoideum.</title>
        <authorList>
            <person name="Eichinger L."/>
            <person name="Pachebat J.A."/>
            <person name="Gloeckner G."/>
            <person name="Rajandream M.A."/>
            <person name="Sucgang R."/>
            <person name="Berriman M."/>
            <person name="Song J."/>
            <person name="Olsen R."/>
            <person name="Szafranski K."/>
            <person name="Xu Q."/>
            <person name="Tunggal B."/>
            <person name="Kummerfeld S."/>
            <person name="Madera M."/>
            <person name="Konfortov B.A."/>
            <person name="Rivero F."/>
            <person name="Bankier A.T."/>
            <person name="Lehmann R."/>
            <person name="Hamlin N."/>
            <person name="Davies R."/>
            <person name="Gaudet P."/>
            <person name="Fey P."/>
            <person name="Pilcher K."/>
            <person name="Chen G."/>
            <person name="Saunders D."/>
            <person name="Sodergren E.J."/>
            <person name="Davis P."/>
            <person name="Kerhornou A."/>
            <person name="Nie X."/>
            <person name="Hall N."/>
            <person name="Anjard C."/>
            <person name="Hemphill L."/>
            <person name="Bason N."/>
            <person name="Farbrother P."/>
            <person name="Desany B."/>
            <person name="Just E."/>
            <person name="Morio T."/>
            <person name="Rost R."/>
            <person name="Churcher C.M."/>
            <person name="Cooper J."/>
            <person name="Haydock S."/>
            <person name="van Driessche N."/>
            <person name="Cronin A."/>
            <person name="Goodhead I."/>
            <person name="Muzny D.M."/>
            <person name="Mourier T."/>
            <person name="Pain A."/>
            <person name="Lu M."/>
            <person name="Harper D."/>
            <person name="Lindsay R."/>
            <person name="Hauser H."/>
            <person name="James K.D."/>
            <person name="Quiles M."/>
            <person name="Madan Babu M."/>
            <person name="Saito T."/>
            <person name="Buchrieser C."/>
            <person name="Wardroper A."/>
            <person name="Felder M."/>
            <person name="Thangavelu M."/>
            <person name="Johnson D."/>
            <person name="Knights A."/>
            <person name="Loulseged H."/>
            <person name="Mungall K.L."/>
            <person name="Oliver K."/>
            <person name="Price C."/>
            <person name="Quail M.A."/>
            <person name="Urushihara H."/>
            <person name="Hernandez J."/>
            <person name="Rabbinowitsch E."/>
            <person name="Steffen D."/>
            <person name="Sanders M."/>
            <person name="Ma J."/>
            <person name="Kohara Y."/>
            <person name="Sharp S."/>
            <person name="Simmonds M.N."/>
            <person name="Spiegler S."/>
            <person name="Tivey A."/>
            <person name="Sugano S."/>
            <person name="White B."/>
            <person name="Walker D."/>
            <person name="Woodward J.R."/>
            <person name="Winckler T."/>
            <person name="Tanaka Y."/>
            <person name="Shaulsky G."/>
            <person name="Schleicher M."/>
            <person name="Weinstock G.M."/>
            <person name="Rosenthal A."/>
            <person name="Cox E.C."/>
            <person name="Chisholm R.L."/>
            <person name="Gibbs R.A."/>
            <person name="Loomis W.F."/>
            <person name="Platzer M."/>
            <person name="Kay R.R."/>
            <person name="Williams J.G."/>
            <person name="Dear P.H."/>
            <person name="Noegel A.A."/>
            <person name="Barrell B.G."/>
            <person name="Kuspa A."/>
        </authorList>
    </citation>
    <scope>NUCLEOTIDE SEQUENCE [LARGE SCALE GENOMIC DNA]</scope>
    <source>
        <strain>AX4</strain>
    </source>
</reference>
<evidence type="ECO:0000250" key="1">
    <source>
        <dbReference type="UniProtKB" id="Q54BE5"/>
    </source>
</evidence>
<evidence type="ECO:0000269" key="2">
    <source>
    </source>
</evidence>
<evidence type="ECO:0000303" key="3">
    <source>
    </source>
</evidence>
<evidence type="ECO:0000305" key="4"/>
<evidence type="ECO:0000305" key="5">
    <source>
    </source>
</evidence>
<name>TPS4_DICDI</name>
<organism>
    <name type="scientific">Dictyostelium discoideum</name>
    <name type="common">Social amoeba</name>
    <dbReference type="NCBI Taxonomy" id="44689"/>
    <lineage>
        <taxon>Eukaryota</taxon>
        <taxon>Amoebozoa</taxon>
        <taxon>Evosea</taxon>
        <taxon>Eumycetozoa</taxon>
        <taxon>Dictyostelia</taxon>
        <taxon>Dictyosteliales</taxon>
        <taxon>Dictyosteliaceae</taxon>
        <taxon>Dictyostelium</taxon>
    </lineage>
</organism>